<dbReference type="EC" id="3.6.4.13"/>
<dbReference type="EMBL" id="CH981524">
    <property type="protein sequence ID" value="EDK42770.1"/>
    <property type="molecule type" value="Genomic_DNA"/>
</dbReference>
<dbReference type="RefSeq" id="XP_001528428.1">
    <property type="nucleotide sequence ID" value="XM_001528378.1"/>
</dbReference>
<dbReference type="SMR" id="A5DUB2"/>
<dbReference type="FunCoup" id="A5DUB2">
    <property type="interactions" value="933"/>
</dbReference>
<dbReference type="STRING" id="379508.A5DUB2"/>
<dbReference type="GeneID" id="5234662"/>
<dbReference type="KEGG" id="lel:PVL30_000913"/>
<dbReference type="VEuPathDB" id="FungiDB:LELG_00948"/>
<dbReference type="eggNOG" id="KOG0347">
    <property type="taxonomic scope" value="Eukaryota"/>
</dbReference>
<dbReference type="HOGENOM" id="CLU_003041_13_0_1"/>
<dbReference type="InParanoid" id="A5DUB2"/>
<dbReference type="OMA" id="QMIQKAR"/>
<dbReference type="OrthoDB" id="4310724at2759"/>
<dbReference type="Proteomes" id="UP000001996">
    <property type="component" value="Unassembled WGS sequence"/>
</dbReference>
<dbReference type="GO" id="GO:0005730">
    <property type="term" value="C:nucleolus"/>
    <property type="evidence" value="ECO:0007669"/>
    <property type="project" value="UniProtKB-SubCell"/>
</dbReference>
<dbReference type="GO" id="GO:0005524">
    <property type="term" value="F:ATP binding"/>
    <property type="evidence" value="ECO:0007669"/>
    <property type="project" value="UniProtKB-KW"/>
</dbReference>
<dbReference type="GO" id="GO:0016887">
    <property type="term" value="F:ATP hydrolysis activity"/>
    <property type="evidence" value="ECO:0007669"/>
    <property type="project" value="RHEA"/>
</dbReference>
<dbReference type="GO" id="GO:0003723">
    <property type="term" value="F:RNA binding"/>
    <property type="evidence" value="ECO:0007669"/>
    <property type="project" value="UniProtKB-KW"/>
</dbReference>
<dbReference type="GO" id="GO:0003724">
    <property type="term" value="F:RNA helicase activity"/>
    <property type="evidence" value="ECO:0007669"/>
    <property type="project" value="UniProtKB-EC"/>
</dbReference>
<dbReference type="GO" id="GO:0006364">
    <property type="term" value="P:rRNA processing"/>
    <property type="evidence" value="ECO:0007669"/>
    <property type="project" value="UniProtKB-KW"/>
</dbReference>
<dbReference type="CDD" id="cd17946">
    <property type="entry name" value="DEADc_DDX24"/>
    <property type="match status" value="1"/>
</dbReference>
<dbReference type="CDD" id="cd18787">
    <property type="entry name" value="SF2_C_DEAD"/>
    <property type="match status" value="1"/>
</dbReference>
<dbReference type="Gene3D" id="3.40.50.300">
    <property type="entry name" value="P-loop containing nucleotide triphosphate hydrolases"/>
    <property type="match status" value="2"/>
</dbReference>
<dbReference type="InterPro" id="IPR011545">
    <property type="entry name" value="DEAD/DEAH_box_helicase_dom"/>
</dbReference>
<dbReference type="InterPro" id="IPR014001">
    <property type="entry name" value="Helicase_ATP-bd"/>
</dbReference>
<dbReference type="InterPro" id="IPR001650">
    <property type="entry name" value="Helicase_C-like"/>
</dbReference>
<dbReference type="InterPro" id="IPR027417">
    <property type="entry name" value="P-loop_NTPase"/>
</dbReference>
<dbReference type="InterPro" id="IPR000629">
    <property type="entry name" value="RNA-helicase_DEAD-box_CS"/>
</dbReference>
<dbReference type="InterPro" id="IPR014014">
    <property type="entry name" value="RNA_helicase_DEAD_Q_motif"/>
</dbReference>
<dbReference type="PANTHER" id="PTHR24031">
    <property type="entry name" value="RNA HELICASE"/>
    <property type="match status" value="1"/>
</dbReference>
<dbReference type="Pfam" id="PF00270">
    <property type="entry name" value="DEAD"/>
    <property type="match status" value="1"/>
</dbReference>
<dbReference type="Pfam" id="PF00271">
    <property type="entry name" value="Helicase_C"/>
    <property type="match status" value="1"/>
</dbReference>
<dbReference type="SMART" id="SM00487">
    <property type="entry name" value="DEXDc"/>
    <property type="match status" value="1"/>
</dbReference>
<dbReference type="SMART" id="SM00490">
    <property type="entry name" value="HELICc"/>
    <property type="match status" value="1"/>
</dbReference>
<dbReference type="SUPFAM" id="SSF52540">
    <property type="entry name" value="P-loop containing nucleoside triphosphate hydrolases"/>
    <property type="match status" value="1"/>
</dbReference>
<dbReference type="PROSITE" id="PS00039">
    <property type="entry name" value="DEAD_ATP_HELICASE"/>
    <property type="match status" value="1"/>
</dbReference>
<dbReference type="PROSITE" id="PS51192">
    <property type="entry name" value="HELICASE_ATP_BIND_1"/>
    <property type="match status" value="1"/>
</dbReference>
<dbReference type="PROSITE" id="PS51194">
    <property type="entry name" value="HELICASE_CTER"/>
    <property type="match status" value="1"/>
</dbReference>
<dbReference type="PROSITE" id="PS51195">
    <property type="entry name" value="Q_MOTIF"/>
    <property type="match status" value="1"/>
</dbReference>
<evidence type="ECO:0000250" key="1"/>
<evidence type="ECO:0000255" key="2">
    <source>
        <dbReference type="PROSITE-ProRule" id="PRU00541"/>
    </source>
</evidence>
<evidence type="ECO:0000255" key="3">
    <source>
        <dbReference type="PROSITE-ProRule" id="PRU00542"/>
    </source>
</evidence>
<evidence type="ECO:0000256" key="4">
    <source>
        <dbReference type="SAM" id="MobiDB-lite"/>
    </source>
</evidence>
<evidence type="ECO:0000305" key="5"/>
<keyword id="KW-0067">ATP-binding</keyword>
<keyword id="KW-0347">Helicase</keyword>
<keyword id="KW-0378">Hydrolase</keyword>
<keyword id="KW-0547">Nucleotide-binding</keyword>
<keyword id="KW-0539">Nucleus</keyword>
<keyword id="KW-1185">Reference proteome</keyword>
<keyword id="KW-0690">Ribosome biogenesis</keyword>
<keyword id="KW-0694">RNA-binding</keyword>
<keyword id="KW-0698">rRNA processing</keyword>
<proteinExistence type="inferred from homology"/>
<reference key="1">
    <citation type="journal article" date="2009" name="Nature">
        <title>Evolution of pathogenicity and sexual reproduction in eight Candida genomes.</title>
        <authorList>
            <person name="Butler G."/>
            <person name="Rasmussen M.D."/>
            <person name="Lin M.F."/>
            <person name="Santos M.A.S."/>
            <person name="Sakthikumar S."/>
            <person name="Munro C.A."/>
            <person name="Rheinbay E."/>
            <person name="Grabherr M."/>
            <person name="Forche A."/>
            <person name="Reedy J.L."/>
            <person name="Agrafioti I."/>
            <person name="Arnaud M.B."/>
            <person name="Bates S."/>
            <person name="Brown A.J.P."/>
            <person name="Brunke S."/>
            <person name="Costanzo M.C."/>
            <person name="Fitzpatrick D.A."/>
            <person name="de Groot P.W.J."/>
            <person name="Harris D."/>
            <person name="Hoyer L.L."/>
            <person name="Hube B."/>
            <person name="Klis F.M."/>
            <person name="Kodira C."/>
            <person name="Lennard N."/>
            <person name="Logue M.E."/>
            <person name="Martin R."/>
            <person name="Neiman A.M."/>
            <person name="Nikolaou E."/>
            <person name="Quail M.A."/>
            <person name="Quinn J."/>
            <person name="Santos M.C."/>
            <person name="Schmitzberger F.F."/>
            <person name="Sherlock G."/>
            <person name="Shah P."/>
            <person name="Silverstein K.A.T."/>
            <person name="Skrzypek M.S."/>
            <person name="Soll D."/>
            <person name="Staggs R."/>
            <person name="Stansfield I."/>
            <person name="Stumpf M.P.H."/>
            <person name="Sudbery P.E."/>
            <person name="Srikantha T."/>
            <person name="Zeng Q."/>
            <person name="Berman J."/>
            <person name="Berriman M."/>
            <person name="Heitman J."/>
            <person name="Gow N.A.R."/>
            <person name="Lorenz M.C."/>
            <person name="Birren B.W."/>
            <person name="Kellis M."/>
            <person name="Cuomo C.A."/>
        </authorList>
    </citation>
    <scope>NUCLEOTIDE SEQUENCE [LARGE SCALE GENOMIC DNA]</scope>
    <source>
        <strain>ATCC 11503 / BCRC 21390 / CBS 2605 / JCM 1781 / NBRC 1676 / NRRL YB-4239</strain>
    </source>
</reference>
<sequence length="855" mass="96698">MVKTVANGKKKPQKVVKKQQKTQKKHNQQKLQKRNTPTLKQKLKKESKIVKINELAWKPVEIPDNFGDFGGFYGLEEIDGVDVEMVDGKPQFVVKGEEGEKSVSNENTTTNELEDGDDIEVDEGEEIAQQEQENSDNDELIEEDAEEVEEQQQHGEKELEEEEFTGFGDDIAKEEKDSDGAKKKLNSSEDIDELKYNAFANLDLPLPNDDEIDLPEWGEDKIETCLSPYILNGLSNMKFTTPTPIQKRTIPLALEGKDVIGKATTGSGKTLAYGIPILEKYIQSLDTVKRKVREKVVNHPTGIIFAPTRELAHQVVDHLNKIAQYSPLSTKGIVSVTGGLSIQKQERLLSFGPGIIVATPGRMLELCQNDQELVKRLSMTDIIVLDEADRLLQDGHFEEFEKILELFNKNRPKNDKSIEWKWQTLVFSATFSRDLFGKLDKQQKQKSVKGNGKALNKADSGNSLVQNDEIIELLREKLRFKDKAPSLVDANPKEIVSGQITEALVECGPLERDLYLYYFLLMYKGSTLVFANSIDSVKRLVPLLNNLNIPAFAIHSSMIQKQRLRSLERFKDASEKNQTAVLVASDVAARGLDIPNIDHVAHYHLPRSADVYIHRSGRTARAGKEGVSVMFCSPQEASGPLRKLRKLVASNAANNKNQKINVHSDVKLLPVEMDLVSQLRPRVELAGRLADSNISSTATRKENSWVKQAAEELGVEDLHDLDEFEDDIIKKQRKRQESKRLDKNEQKRLRFELRELLANPIRKNNRRSYLTSGLQNLAHLMVQGTHHEDVLGHEKVKALKDLQKNGSKIKPVKGDDKMKRIAKVNQRKQAKKDAKKDAKQKRQELRHGHSNKSEE</sequence>
<comment type="function">
    <text evidence="1">ATP-binding RNA helicase involved in the biogenesis of 60S ribosomal subunits and is required for the normal formation of 25S and 5.8S rRNAs.</text>
</comment>
<comment type="catalytic activity">
    <reaction>
        <text>ATP + H2O = ADP + phosphate + H(+)</text>
        <dbReference type="Rhea" id="RHEA:13065"/>
        <dbReference type="ChEBI" id="CHEBI:15377"/>
        <dbReference type="ChEBI" id="CHEBI:15378"/>
        <dbReference type="ChEBI" id="CHEBI:30616"/>
        <dbReference type="ChEBI" id="CHEBI:43474"/>
        <dbReference type="ChEBI" id="CHEBI:456216"/>
        <dbReference type="EC" id="3.6.4.13"/>
    </reaction>
</comment>
<comment type="subcellular location">
    <subcellularLocation>
        <location evidence="1">Nucleus</location>
        <location evidence="1">Nucleolus</location>
    </subcellularLocation>
</comment>
<comment type="domain">
    <text>The Q motif is unique to and characteristic of the DEAD box family of RNA helicases and controls ATP binding and hydrolysis.</text>
</comment>
<comment type="similarity">
    <text evidence="5">Belongs to the DEAD box helicase family. DDX24/MAK5 subfamily.</text>
</comment>
<accession>A5DUB2</accession>
<name>MAK5_LODEL</name>
<feature type="chain" id="PRO_0000294637" description="ATP-dependent RNA helicase MAK5">
    <location>
        <begin position="1"/>
        <end position="855"/>
    </location>
</feature>
<feature type="domain" description="Helicase ATP-binding" evidence="2">
    <location>
        <begin position="250"/>
        <end position="449"/>
    </location>
</feature>
<feature type="domain" description="Helicase C-terminal" evidence="3">
    <location>
        <begin position="515"/>
        <end position="668"/>
    </location>
</feature>
<feature type="region of interest" description="Disordered" evidence="4">
    <location>
        <begin position="1"/>
        <end position="43"/>
    </location>
</feature>
<feature type="region of interest" description="Disordered" evidence="4">
    <location>
        <begin position="95"/>
        <end position="167"/>
    </location>
</feature>
<feature type="region of interest" description="Disordered" evidence="4">
    <location>
        <begin position="801"/>
        <end position="855"/>
    </location>
</feature>
<feature type="short sequence motif" description="Q motif">
    <location>
        <begin position="219"/>
        <end position="247"/>
    </location>
</feature>
<feature type="short sequence motif" description="DEAD box">
    <location>
        <begin position="386"/>
        <end position="389"/>
    </location>
</feature>
<feature type="compositionally biased region" description="Basic residues" evidence="4">
    <location>
        <begin position="8"/>
        <end position="33"/>
    </location>
</feature>
<feature type="compositionally biased region" description="Acidic residues" evidence="4">
    <location>
        <begin position="112"/>
        <end position="150"/>
    </location>
</feature>
<feature type="compositionally biased region" description="Basic residues" evidence="4">
    <location>
        <begin position="820"/>
        <end position="830"/>
    </location>
</feature>
<feature type="compositionally biased region" description="Basic and acidic residues" evidence="4">
    <location>
        <begin position="831"/>
        <end position="855"/>
    </location>
</feature>
<feature type="binding site" evidence="2">
    <location>
        <begin position="263"/>
        <end position="270"/>
    </location>
    <ligand>
        <name>ATP</name>
        <dbReference type="ChEBI" id="CHEBI:30616"/>
    </ligand>
</feature>
<organism>
    <name type="scientific">Lodderomyces elongisporus (strain ATCC 11503 / CBS 2605 / JCM 1781 / NBRC 1676 / NRRL YB-4239)</name>
    <name type="common">Yeast</name>
    <name type="synonym">Saccharomyces elongisporus</name>
    <dbReference type="NCBI Taxonomy" id="379508"/>
    <lineage>
        <taxon>Eukaryota</taxon>
        <taxon>Fungi</taxon>
        <taxon>Dikarya</taxon>
        <taxon>Ascomycota</taxon>
        <taxon>Saccharomycotina</taxon>
        <taxon>Pichiomycetes</taxon>
        <taxon>Debaryomycetaceae</taxon>
        <taxon>Candida/Lodderomyces clade</taxon>
        <taxon>Lodderomyces</taxon>
    </lineage>
</organism>
<gene>
    <name type="primary">MAK5</name>
    <name type="ORF">LELG_00948</name>
</gene>
<protein>
    <recommendedName>
        <fullName>ATP-dependent RNA helicase MAK5</fullName>
        <ecNumber>3.6.4.13</ecNumber>
    </recommendedName>
</protein>